<evidence type="ECO:0000256" key="1">
    <source>
        <dbReference type="SAM" id="MobiDB-lite"/>
    </source>
</evidence>
<evidence type="ECO:0000269" key="2">
    <source>
    </source>
</evidence>
<evidence type="ECO:0000269" key="3">
    <source>
    </source>
</evidence>
<evidence type="ECO:0000303" key="4">
    <source>
    </source>
</evidence>
<evidence type="ECO:0000305" key="5"/>
<evidence type="ECO:0000305" key="6">
    <source>
    </source>
</evidence>
<evidence type="ECO:0000312" key="7">
    <source>
        <dbReference type="Araport" id="AT5G56780"/>
    </source>
</evidence>
<evidence type="ECO:0000312" key="8">
    <source>
        <dbReference type="EMBL" id="BAB09896.1"/>
    </source>
</evidence>
<proteinExistence type="evidence at protein level"/>
<name>ET2_ARATH</name>
<gene>
    <name evidence="4" type="primary">ET2</name>
    <name evidence="7" type="ordered locus">At5g56780</name>
    <name evidence="8" type="ORF">MIK19.25</name>
</gene>
<accession>F4K933</accession>
<accession>Q9FJT5</accession>
<dbReference type="EMBL" id="AB013392">
    <property type="protein sequence ID" value="BAB09896.1"/>
    <property type="status" value="ALT_SEQ"/>
    <property type="molecule type" value="Genomic_DNA"/>
</dbReference>
<dbReference type="EMBL" id="CP002688">
    <property type="protein sequence ID" value="AED96806.1"/>
    <property type="molecule type" value="Genomic_DNA"/>
</dbReference>
<dbReference type="RefSeq" id="NP_200489.2">
    <property type="nucleotide sequence ID" value="NM_125061.4"/>
</dbReference>
<dbReference type="FunCoup" id="F4K933">
    <property type="interactions" value="393"/>
</dbReference>
<dbReference type="IntAct" id="F4K933">
    <property type="interactions" value="3"/>
</dbReference>
<dbReference type="STRING" id="3702.F4K933"/>
<dbReference type="PaxDb" id="3702-AT5G56780.1"/>
<dbReference type="EnsemblPlants" id="AT5G56780.1">
    <property type="protein sequence ID" value="AT5G56780.1"/>
    <property type="gene ID" value="AT5G56780"/>
</dbReference>
<dbReference type="GeneID" id="835780"/>
<dbReference type="Gramene" id="AT5G56780.1">
    <property type="protein sequence ID" value="AT5G56780.1"/>
    <property type="gene ID" value="AT5G56780"/>
</dbReference>
<dbReference type="KEGG" id="ath:AT5G56780"/>
<dbReference type="Araport" id="AT5G56780"/>
<dbReference type="TAIR" id="AT5G56780">
    <property type="gene designation" value="ET2"/>
</dbReference>
<dbReference type="eggNOG" id="ENOG502QXNF">
    <property type="taxonomic scope" value="Eukaryota"/>
</dbReference>
<dbReference type="HOGENOM" id="CLU_025361_0_0_1"/>
<dbReference type="InParanoid" id="F4K933"/>
<dbReference type="OMA" id="EDYNICG"/>
<dbReference type="OrthoDB" id="1922121at2759"/>
<dbReference type="PRO" id="PR:F4K933"/>
<dbReference type="Proteomes" id="UP000006548">
    <property type="component" value="Chromosome 5"/>
</dbReference>
<dbReference type="ExpressionAtlas" id="F4K933">
    <property type="expression patterns" value="baseline and differential"/>
</dbReference>
<dbReference type="GO" id="GO:0005737">
    <property type="term" value="C:cytoplasm"/>
    <property type="evidence" value="ECO:0000314"/>
    <property type="project" value="UniProtKB"/>
</dbReference>
<dbReference type="GO" id="GO:0005634">
    <property type="term" value="C:nucleus"/>
    <property type="evidence" value="ECO:0000314"/>
    <property type="project" value="UniProtKB"/>
</dbReference>
<dbReference type="GO" id="GO:0097100">
    <property type="term" value="F:supercoiled DNA binding"/>
    <property type="evidence" value="ECO:0000314"/>
    <property type="project" value="TAIR"/>
</dbReference>
<dbReference type="GO" id="GO:0045892">
    <property type="term" value="P:negative regulation of DNA-templated transcription"/>
    <property type="evidence" value="ECO:0000314"/>
    <property type="project" value="UniProtKB"/>
</dbReference>
<dbReference type="GO" id="GO:2000033">
    <property type="term" value="P:regulation of seed dormancy process"/>
    <property type="evidence" value="ECO:0000315"/>
    <property type="project" value="TAIR"/>
</dbReference>
<dbReference type="GO" id="GO:0010089">
    <property type="term" value="P:xylem development"/>
    <property type="evidence" value="ECO:0000315"/>
    <property type="project" value="UniProtKB"/>
</dbReference>
<dbReference type="InterPro" id="IPR038909">
    <property type="entry name" value="Effector_transcript"/>
</dbReference>
<dbReference type="PANTHER" id="PTHR35133">
    <property type="entry name" value="PROTEIN EFFECTOR OF TRANSCRIPTION 2-RELATED"/>
    <property type="match status" value="1"/>
</dbReference>
<dbReference type="PANTHER" id="PTHR35133:SF1">
    <property type="entry name" value="PROTEIN EFFECTOR OF TRANSCRIPTION 2-RELATED"/>
    <property type="match status" value="1"/>
</dbReference>
<dbReference type="Pfam" id="PF19239">
    <property type="entry name" value="GIY_YIG_domain"/>
    <property type="match status" value="1"/>
</dbReference>
<keyword id="KW-0963">Cytoplasm</keyword>
<keyword id="KW-0238">DNA-binding</keyword>
<keyword id="KW-0539">Nucleus</keyword>
<keyword id="KW-1185">Reference proteome</keyword>
<keyword id="KW-0677">Repeat</keyword>
<keyword id="KW-0804">Transcription</keyword>
<keyword id="KW-0805">Transcription regulation</keyword>
<protein>
    <recommendedName>
        <fullName evidence="4">Protein EFFECTOR OF TRANSCRIPTION 2</fullName>
        <shortName evidence="4">AtET2</shortName>
    </recommendedName>
</protein>
<sequence>MEFGDGVSFAVVPTVFKREDYKRTKHDTVFSKWQVLIGSNDWEDFKNGKDGVGRYRVQNLPRKSCPGLYELGVAVIGQEQCRKLEPDIVLASYLGQAESVRSRLQRYGRSGAHLRNVNNLNDCETIESPVKAVTGGLFEDIFSKGGSILYRWAPMGSKREAEATEGMLLSTFDYAWNKGSNGERRQLDLLKKLGDREFMSKRKSGISRMLFPFLRNQVGIRIKGEKHVLKEERKLTCDVDEEKSNNFLTSILKLTRSRPQPVSDRFDEVDGSCSDIVCGVLLEDGGCCIRSPVKGRKRCIEHKGQRVCRVSPEKQTPPKSEIFTGQDHHNHKDSDVVCGVILPDMEPCNKRPVPGRKRCEDHKGMRINAFLFLLNQTDREKTVKDEKPDPESHTESIEEEALTRFCEATTKNGLPCTRSSPKGSKRCWQHKEKTSSDTSPVYFQPEAAKNVACGVKLGNGLICERSPVKGRKRCEEHKGMRIT</sequence>
<reference key="1">
    <citation type="journal article" date="1998" name="DNA Res.">
        <title>Structural analysis of Arabidopsis thaliana chromosome 5. VI. Sequence features of the regions of 1,367,185 bp covered by 19 physically assigned P1 and TAC clones.</title>
        <authorList>
            <person name="Kotani H."/>
            <person name="Nakamura Y."/>
            <person name="Sato S."/>
            <person name="Asamizu E."/>
            <person name="Kaneko T."/>
            <person name="Miyajima N."/>
            <person name="Tabata S."/>
        </authorList>
    </citation>
    <scope>NUCLEOTIDE SEQUENCE [LARGE SCALE GENOMIC DNA]</scope>
    <source>
        <strain>cv. Columbia</strain>
    </source>
</reference>
<reference key="2">
    <citation type="journal article" date="2017" name="Plant J.">
        <title>Araport11: a complete reannotation of the Arabidopsis thaliana reference genome.</title>
        <authorList>
            <person name="Cheng C.Y."/>
            <person name="Krishnakumar V."/>
            <person name="Chan A.P."/>
            <person name="Thibaud-Nissen F."/>
            <person name="Schobel S."/>
            <person name="Town C.D."/>
        </authorList>
    </citation>
    <scope>GENOME REANNOTATION</scope>
    <source>
        <strain>cv. Columbia</strain>
    </source>
</reference>
<reference key="3">
    <citation type="journal article" date="2008" name="Dev. Biol.">
        <title>EFFECTOR OF TRANSCRIPTION2 is involved in xylem differentiation and includes a functional DNA single strand cutting domain.</title>
        <authorList>
            <person name="Ivanov R."/>
            <person name="Tiedemann J."/>
            <person name="Czihal A."/>
            <person name="Schallau A."/>
            <person name="Diep L.H."/>
            <person name="Mock H.P."/>
            <person name="Claus B."/>
            <person name="Tewes A."/>
            <person name="Baeumlein H."/>
        </authorList>
    </citation>
    <scope>FUNCTION</scope>
    <scope>SUBCELLULAR LOCATION</scope>
    <scope>TISSUE SPECIFICITY</scope>
    <scope>GIY-YIG DOMAIN</scope>
    <scope>MUTAGENESIS OF ARG-103</scope>
</reference>
<reference key="4">
    <citation type="journal article" date="2012" name="J. Plant Physiol.">
        <title>Transcriptional regulator AtET2 is required for the induction of dormancy during late seed development.</title>
        <authorList>
            <person name="Ivanov R."/>
            <person name="Tiedemann J."/>
            <person name="Czihal A."/>
            <person name="Baumlein H."/>
        </authorList>
    </citation>
    <scope>FUNCTION</scope>
    <scope>DEVELOPMENTAL STAGE</scope>
    <scope>DISRUPTION PHENOTYPE</scope>
</reference>
<feature type="chain" id="PRO_0000436019" description="Protein EFFECTOR OF TRANSCRIPTION 2">
    <location>
        <begin position="1"/>
        <end position="483"/>
    </location>
</feature>
<feature type="domain" description="GIY-YIG" evidence="6">
    <location>
        <begin position="64"/>
        <end position="112"/>
    </location>
</feature>
<feature type="repeat" description="Cx9Cx9RCx2HK" evidence="6">
    <location>
        <begin position="278"/>
        <end position="303"/>
    </location>
</feature>
<feature type="repeat" description="Cx9Cx9RCx2HK" evidence="6">
    <location>
        <begin position="338"/>
        <end position="363"/>
    </location>
</feature>
<feature type="repeat" description="Cx9Cx9RCx2HK" evidence="6">
    <location>
        <begin position="406"/>
        <end position="431"/>
    </location>
</feature>
<feature type="repeat" description="Cx9Cx9RCx2HK" evidence="6">
    <location>
        <begin position="453"/>
        <end position="478"/>
    </location>
</feature>
<feature type="region of interest" description="Disordered" evidence="1">
    <location>
        <begin position="380"/>
        <end position="399"/>
    </location>
</feature>
<feature type="compositionally biased region" description="Basic and acidic residues" evidence="1">
    <location>
        <begin position="380"/>
        <end position="396"/>
    </location>
</feature>
<feature type="mutagenesis site" description="Defective in GIY-YIG domain." evidence="2">
    <original>R</original>
    <variation>A</variation>
    <location>
        <position position="103"/>
    </location>
</feature>
<comment type="function">
    <text evidence="2 3">Transcriptional regulator involved in the regulation of cell differentiation in meristems. Probably regulates the expression of various KNAT genes involved in the maintenance of the cells in an undifferentiated, merismastic state. Plays a role in the regulation of gibberellin 20 oxidase and the gibberellin-regulated protein GASA4. Localizes in the nucleus during the cellular differentiation state and may act via a single strand cutting domain (PubMed:17991462). Transcriptional regulator required for the induction of dormancy during late seed development. Interacts genetically with FUS3 and may be component of the same regulatory pathway during embryogenesis. Binds both linear and supercoiled DNA without sequence preference (PubMed:22226340).</text>
</comment>
<comment type="subcellular location">
    <subcellularLocation>
        <location evidence="2">Cytoplasm</location>
    </subcellularLocation>
    <subcellularLocation>
        <location evidence="2">Nucleus</location>
    </subcellularLocation>
    <text evidence="2">Localizes to the cytoplasm in non-differentiating cells and to the nucleus in differentiating cells.</text>
</comment>
<comment type="tissue specificity">
    <text evidence="2">Expressed in vascular tissues of stems, hypocotyls, leaves and flowers. Expressed in the vascular bundles of xylem in shoot parenchyma cells. Expressed in the remnant cytoplasm of differentiated fiber cells and in protoxylem element of parenchymal cells.</text>
</comment>
<comment type="developmental stage">
    <text evidence="3">During embryogenesis, expressed in the embryo at the late torpedo/cotyledon stage, at the onset of maturation. Not expressed during early stages of seed development or in mature seeds.</text>
</comment>
<comment type="domain">
    <text evidence="6">Contains a bacterial GIY-YIG-like domain which can functionally replace the bacterial GIY-YIG domain in the UVRC protein.</text>
</comment>
<comment type="disruption phenotype">
    <text evidence="2 3">Reduced levels of lignin in leaves and stems (PubMed:17991462). Reduced seed germination rate (PubMed:22226340).</text>
</comment>
<comment type="sequence caution" evidence="5">
    <conflict type="erroneous gene model prediction">
        <sequence resource="EMBL-CDS" id="BAB09896"/>
    </conflict>
</comment>
<organism>
    <name type="scientific">Arabidopsis thaliana</name>
    <name type="common">Mouse-ear cress</name>
    <dbReference type="NCBI Taxonomy" id="3702"/>
    <lineage>
        <taxon>Eukaryota</taxon>
        <taxon>Viridiplantae</taxon>
        <taxon>Streptophyta</taxon>
        <taxon>Embryophyta</taxon>
        <taxon>Tracheophyta</taxon>
        <taxon>Spermatophyta</taxon>
        <taxon>Magnoliopsida</taxon>
        <taxon>eudicotyledons</taxon>
        <taxon>Gunneridae</taxon>
        <taxon>Pentapetalae</taxon>
        <taxon>rosids</taxon>
        <taxon>malvids</taxon>
        <taxon>Brassicales</taxon>
        <taxon>Brassicaceae</taxon>
        <taxon>Camelineae</taxon>
        <taxon>Arabidopsis</taxon>
    </lineage>
</organism>